<proteinExistence type="inferred from homology"/>
<comment type="similarity">
    <text evidence="1">Belongs to the MG067/MG068/MG395 family.</text>
</comment>
<dbReference type="EMBL" id="U00089">
    <property type="protein sequence ID" value="AAB95909.1"/>
    <property type="molecule type" value="Genomic_DNA"/>
</dbReference>
<dbReference type="PIR" id="S73587">
    <property type="entry name" value="S73587"/>
</dbReference>
<dbReference type="RefSeq" id="NP_110270.1">
    <property type="nucleotide sequence ID" value="NC_000912.1"/>
</dbReference>
<dbReference type="RefSeq" id="WP_010874938.1">
    <property type="nucleotide sequence ID" value="NZ_OU342337.1"/>
</dbReference>
<dbReference type="STRING" id="272634.MPN_581"/>
<dbReference type="EnsemblBacteria" id="AAB95909">
    <property type="protein sequence ID" value="AAB95909"/>
    <property type="gene ID" value="MPN_581"/>
</dbReference>
<dbReference type="KEGG" id="mpn:MPN_581"/>
<dbReference type="PATRIC" id="fig|272634.6.peg.642"/>
<dbReference type="HOGENOM" id="CLU_1048972_0_0_14"/>
<dbReference type="OrthoDB" id="398874at2"/>
<dbReference type="BioCyc" id="MPNE272634:G1GJ3-946-MONOMER"/>
<dbReference type="Proteomes" id="UP000000808">
    <property type="component" value="Chromosome"/>
</dbReference>
<dbReference type="InterPro" id="IPR022382">
    <property type="entry name" value="Mycoplasma_peptidase_DUF31"/>
</dbReference>
<dbReference type="InterPro" id="IPR022381">
    <property type="entry name" value="Uncharacterised_MG067"/>
</dbReference>
<dbReference type="Pfam" id="PF01732">
    <property type="entry name" value="Mycop_pep_DUF31"/>
    <property type="match status" value="1"/>
</dbReference>
<dbReference type="PRINTS" id="PR00840">
    <property type="entry name" value="Y06768FAMILY"/>
</dbReference>
<accession>P75199</accession>
<reference key="1">
    <citation type="journal article" date="1996" name="Nucleic Acids Res.">
        <title>Complete sequence analysis of the genome of the bacterium Mycoplasma pneumoniae.</title>
        <authorList>
            <person name="Himmelreich R."/>
            <person name="Hilbert H."/>
            <person name="Plagens H."/>
            <person name="Pirkl E."/>
            <person name="Li B.-C."/>
            <person name="Herrmann R."/>
        </authorList>
    </citation>
    <scope>NUCLEOTIDE SEQUENCE [LARGE SCALE GENOMIC DNA]</scope>
    <source>
        <strain>ATCC 29342 / M129 / Subtype 1</strain>
    </source>
</reference>
<organism>
    <name type="scientific">Mycoplasma pneumoniae (strain ATCC 29342 / M129 / Subtype 1)</name>
    <name type="common">Mycoplasmoides pneumoniae</name>
    <dbReference type="NCBI Taxonomy" id="272634"/>
    <lineage>
        <taxon>Bacteria</taxon>
        <taxon>Bacillati</taxon>
        <taxon>Mycoplasmatota</taxon>
        <taxon>Mycoplasmoidales</taxon>
        <taxon>Mycoplasmoidaceae</taxon>
        <taxon>Mycoplasmoides</taxon>
    </lineage>
</organism>
<gene>
    <name type="ordered locus">MPN_581</name>
    <name type="ORF">D02_orf265V</name>
    <name type="ORF">MP261</name>
</gene>
<protein>
    <recommendedName>
        <fullName>Uncharacterized protein MPN_581</fullName>
    </recommendedName>
</protein>
<name>Y581_MYCPN</name>
<evidence type="ECO:0000305" key="1"/>
<feature type="chain" id="PRO_0000210731" description="Uncharacterized protein MPN_581">
    <location>
        <begin position="1"/>
        <end position="265"/>
    </location>
</feature>
<keyword id="KW-1185">Reference proteome</keyword>
<sequence length="265" mass="30452">MQLEKVPRAEYQTKWATNTVPKPTDFYHQLYNLSFSLTLTSQRWNTYGTGWLIDWKDTSTNENKFTAYLATNFHVADTLKNPHDYPPYNQVDNTQDLTTSFRIGKYTDPSLFGLYTNVKHAFVDVQLAALPKMAYAAVDFVDYRFDNKHWKSLNEICPEVGLKPYADFAVLEVPLYLNNKLDYQVWENFIKPAIATYKALGDSTNLFASTSSSDLQNDTYFALGYPLLESNIDAIHFNQTGATLTSVPVKDRIKVKNQSFWTLNK</sequence>